<comment type="function">
    <text evidence="1">Catalyzes the conversion of heme O to heme A by two successive hydroxylations of the methyl group at C8. The first hydroxylation forms heme I, the second hydroxylation results in an unstable dihydroxymethyl group, which spontaneously dehydrates, resulting in the formyl group of heme A.</text>
</comment>
<comment type="catalytic activity">
    <reaction evidence="1">
        <text>Fe(II)-heme o + 2 A + H2O = Fe(II)-heme a + 2 AH2</text>
        <dbReference type="Rhea" id="RHEA:63388"/>
        <dbReference type="ChEBI" id="CHEBI:13193"/>
        <dbReference type="ChEBI" id="CHEBI:15377"/>
        <dbReference type="ChEBI" id="CHEBI:17499"/>
        <dbReference type="ChEBI" id="CHEBI:60530"/>
        <dbReference type="ChEBI" id="CHEBI:61715"/>
        <dbReference type="EC" id="1.17.99.9"/>
    </reaction>
    <physiologicalReaction direction="left-to-right" evidence="1">
        <dbReference type="Rhea" id="RHEA:63389"/>
    </physiologicalReaction>
</comment>
<comment type="cofactor">
    <cofactor evidence="1">
        <name>heme b</name>
        <dbReference type="ChEBI" id="CHEBI:60344"/>
    </cofactor>
</comment>
<comment type="pathway">
    <text evidence="1">Porphyrin-containing compound metabolism; heme A biosynthesis; heme A from heme O: step 1/1.</text>
</comment>
<comment type="subunit">
    <text evidence="1">Interacts with CtaB.</text>
</comment>
<comment type="subcellular location">
    <subcellularLocation>
        <location evidence="1">Cell membrane</location>
        <topology evidence="1">Multi-pass membrane protein</topology>
    </subcellularLocation>
</comment>
<comment type="domain">
    <text evidence="1">The N-half (TM1-TM4) and C-half (TM5-TM8) domains are connected by an intracellular loop. Each domain is formed from four-helix bundles and they align in a pseudo twofold symmetry manner. The N-half domain is the substrate-heme O binding domain and the C-half domain is the cofactor heme B binding domain.</text>
</comment>
<comment type="domain">
    <text evidence="1">The cysteines of disulfide bond Cys-37 and Cys-44 may be involved in transfer of reducing equivalents from quinol in the membrane to the active site of the enzyme.</text>
</comment>
<comment type="similarity">
    <text evidence="1">Belongs to the COX15/CtaA family. Type 1 subfamily.</text>
</comment>
<organism>
    <name type="scientific">Lysinibacillus sphaericus (strain C3-41)</name>
    <dbReference type="NCBI Taxonomy" id="444177"/>
    <lineage>
        <taxon>Bacteria</taxon>
        <taxon>Bacillati</taxon>
        <taxon>Bacillota</taxon>
        <taxon>Bacilli</taxon>
        <taxon>Bacillales</taxon>
        <taxon>Bacillaceae</taxon>
        <taxon>Lysinibacillus</taxon>
    </lineage>
</organism>
<name>CTAA_LYSSC</name>
<protein>
    <recommendedName>
        <fullName evidence="1">Heme A synthase</fullName>
        <shortName evidence="1">HAS</shortName>
        <ecNumber evidence="1">1.17.99.9</ecNumber>
    </recommendedName>
    <alternativeName>
        <fullName evidence="1">Cytochrome aa3-controlling protein</fullName>
    </alternativeName>
</protein>
<feature type="chain" id="PRO_0000348985" description="Heme A synthase">
    <location>
        <begin position="1"/>
        <end position="307"/>
    </location>
</feature>
<feature type="topological domain" description="Cytoplasmic" evidence="1">
    <location>
        <begin position="1"/>
        <end position="8"/>
    </location>
</feature>
<feature type="transmembrane region" description="Helical" evidence="1">
    <location>
        <begin position="9"/>
        <end position="29"/>
    </location>
</feature>
<feature type="topological domain" description="Extracellular" evidence="1">
    <location>
        <begin position="30"/>
        <end position="56"/>
    </location>
</feature>
<feature type="transmembrane region" description="Helical" evidence="1">
    <location>
        <begin position="57"/>
        <end position="77"/>
    </location>
</feature>
<feature type="topological domain" description="Cytoplasmic" evidence="1">
    <location>
        <begin position="78"/>
        <end position="92"/>
    </location>
</feature>
<feature type="transmembrane region" description="Helical" evidence="1">
    <location>
        <begin position="93"/>
        <end position="113"/>
    </location>
</feature>
<feature type="topological domain" description="Extracellular" evidence="1">
    <location>
        <begin position="114"/>
        <end position="123"/>
    </location>
</feature>
<feature type="transmembrane region" description="Helical" evidence="1">
    <location>
        <begin position="124"/>
        <end position="144"/>
    </location>
</feature>
<feature type="topological domain" description="Cytoplasmic" evidence="1">
    <location>
        <begin position="145"/>
        <end position="161"/>
    </location>
</feature>
<feature type="transmembrane region" description="Helical" evidence="1">
    <location>
        <begin position="162"/>
        <end position="182"/>
    </location>
</feature>
<feature type="topological domain" description="Extracellular" evidence="1">
    <location>
        <begin position="183"/>
        <end position="218"/>
    </location>
</feature>
<feature type="transmembrane region" description="Helical" evidence="1">
    <location>
        <begin position="219"/>
        <end position="239"/>
    </location>
</feature>
<feature type="topological domain" description="Cytoplasmic" evidence="1">
    <location>
        <begin position="240"/>
        <end position="247"/>
    </location>
</feature>
<feature type="transmembrane region" description="Helical" evidence="1">
    <location>
        <begin position="248"/>
        <end position="268"/>
    </location>
</feature>
<feature type="topological domain" description="Extracellular" evidence="1">
    <location>
        <begin position="269"/>
        <end position="276"/>
    </location>
</feature>
<feature type="transmembrane region" description="Helical" evidence="1">
    <location>
        <begin position="277"/>
        <end position="297"/>
    </location>
</feature>
<feature type="topological domain" description="Cytoplasmic" evidence="1">
    <location>
        <begin position="298"/>
        <end position="307"/>
    </location>
</feature>
<feature type="active site" evidence="1">
    <location>
        <position position="60"/>
    </location>
</feature>
<feature type="binding site" description="axial binding residue" evidence="1">
    <location>
        <position position="63"/>
    </location>
    <ligand>
        <name>heme o</name>
        <dbReference type="ChEBI" id="CHEBI:24480"/>
    </ligand>
    <ligandPart>
        <name>Fe</name>
        <dbReference type="ChEBI" id="CHEBI:18248"/>
    </ligandPart>
</feature>
<feature type="binding site" description="axial binding residue" evidence="1">
    <location>
        <position position="125"/>
    </location>
    <ligand>
        <name>heme o</name>
        <dbReference type="ChEBI" id="CHEBI:24480"/>
    </ligand>
    <ligandPart>
        <name>Fe</name>
        <dbReference type="ChEBI" id="CHEBI:18248"/>
    </ligandPart>
</feature>
<feature type="binding site" description="axial binding residue" evidence="1">
    <location>
        <position position="217"/>
    </location>
    <ligand>
        <name>heme b</name>
        <dbReference type="ChEBI" id="CHEBI:60344"/>
    </ligand>
    <ligandPart>
        <name>Fe</name>
        <dbReference type="ChEBI" id="CHEBI:18248"/>
    </ligandPart>
</feature>
<feature type="binding site" description="axial binding residue" evidence="1">
    <location>
        <position position="279"/>
    </location>
    <ligand>
        <name>heme b</name>
        <dbReference type="ChEBI" id="CHEBI:60344"/>
    </ligand>
    <ligandPart>
        <name>Fe</name>
        <dbReference type="ChEBI" id="CHEBI:18248"/>
    </ligandPart>
</feature>
<feature type="disulfide bond" description="Essential for catalytic activity" evidence="1">
    <location>
        <begin position="37"/>
        <end position="44"/>
    </location>
</feature>
<feature type="disulfide bond" evidence="1">
    <location>
        <begin position="191"/>
        <end position="197"/>
    </location>
</feature>
<accession>B1HPV0</accession>
<evidence type="ECO:0000255" key="1">
    <source>
        <dbReference type="HAMAP-Rule" id="MF_01664"/>
    </source>
</evidence>
<gene>
    <name evidence="1" type="primary">ctaA</name>
    <name type="ordered locus">Bsph_1394</name>
</gene>
<dbReference type="EC" id="1.17.99.9" evidence="1"/>
<dbReference type="EMBL" id="CP000817">
    <property type="protein sequence ID" value="ACA39002.1"/>
    <property type="molecule type" value="Genomic_DNA"/>
</dbReference>
<dbReference type="RefSeq" id="WP_012293123.1">
    <property type="nucleotide sequence ID" value="NC_010382.1"/>
</dbReference>
<dbReference type="SMR" id="B1HPV0"/>
<dbReference type="EnsemblBacteria" id="ACA39002">
    <property type="protein sequence ID" value="ACA39002"/>
    <property type="gene ID" value="Bsph_1394"/>
</dbReference>
<dbReference type="KEGG" id="lsp:Bsph_1394"/>
<dbReference type="HOGENOM" id="CLU_041525_3_1_9"/>
<dbReference type="UniPathway" id="UPA00269">
    <property type="reaction ID" value="UER00713"/>
</dbReference>
<dbReference type="Proteomes" id="UP000002164">
    <property type="component" value="Chromosome"/>
</dbReference>
<dbReference type="GO" id="GO:0005886">
    <property type="term" value="C:plasma membrane"/>
    <property type="evidence" value="ECO:0007669"/>
    <property type="project" value="UniProtKB-SubCell"/>
</dbReference>
<dbReference type="GO" id="GO:0046872">
    <property type="term" value="F:metal ion binding"/>
    <property type="evidence" value="ECO:0007669"/>
    <property type="project" value="UniProtKB-KW"/>
</dbReference>
<dbReference type="GO" id="GO:0016653">
    <property type="term" value="F:oxidoreductase activity, acting on NAD(P)H, heme protein as acceptor"/>
    <property type="evidence" value="ECO:0007669"/>
    <property type="project" value="InterPro"/>
</dbReference>
<dbReference type="GO" id="GO:0006784">
    <property type="term" value="P:heme A biosynthetic process"/>
    <property type="evidence" value="ECO:0007669"/>
    <property type="project" value="UniProtKB-UniRule"/>
</dbReference>
<dbReference type="HAMAP" id="MF_01664">
    <property type="entry name" value="HemeA_synth_type1"/>
    <property type="match status" value="1"/>
</dbReference>
<dbReference type="InterPro" id="IPR003780">
    <property type="entry name" value="COX15/CtaA_fam"/>
</dbReference>
<dbReference type="InterPro" id="IPR050450">
    <property type="entry name" value="COX15/CtaA_HemeA_synthase"/>
</dbReference>
<dbReference type="InterPro" id="IPR023755">
    <property type="entry name" value="HemeA_Synthase_type1"/>
</dbReference>
<dbReference type="PANTHER" id="PTHR35457">
    <property type="entry name" value="HEME A SYNTHASE"/>
    <property type="match status" value="1"/>
</dbReference>
<dbReference type="PANTHER" id="PTHR35457:SF1">
    <property type="entry name" value="HEME A SYNTHASE"/>
    <property type="match status" value="1"/>
</dbReference>
<dbReference type="Pfam" id="PF02628">
    <property type="entry name" value="COX15-CtaA"/>
    <property type="match status" value="1"/>
</dbReference>
<reference key="1">
    <citation type="journal article" date="2008" name="J. Bacteriol.">
        <title>Complete genome sequence of the mosquitocidal bacterium Bacillus sphaericus C3-41 and comparison with those of closely related Bacillus species.</title>
        <authorList>
            <person name="Hu X."/>
            <person name="Fan W."/>
            <person name="Han B."/>
            <person name="Liu H."/>
            <person name="Zheng D."/>
            <person name="Li Q."/>
            <person name="Dong W."/>
            <person name="Yan J."/>
            <person name="Gao M."/>
            <person name="Berry C."/>
            <person name="Yuan Z."/>
        </authorList>
    </citation>
    <scope>NUCLEOTIDE SEQUENCE [LARGE SCALE GENOMIC DNA]</scope>
    <source>
        <strain>C3-41</strain>
    </source>
</reference>
<keyword id="KW-1003">Cell membrane</keyword>
<keyword id="KW-1015">Disulfide bond</keyword>
<keyword id="KW-0350">Heme biosynthesis</keyword>
<keyword id="KW-0408">Iron</keyword>
<keyword id="KW-0472">Membrane</keyword>
<keyword id="KW-0479">Metal-binding</keyword>
<keyword id="KW-0560">Oxidoreductase</keyword>
<keyword id="KW-0812">Transmembrane</keyword>
<keyword id="KW-1133">Transmembrane helix</keyword>
<proteinExistence type="inferred from homology"/>
<sequence length="307" mass="34806">MQHNRYLKWFAVAATVGMLLILLGGALVTKTDSGLGCGRNWPDCNGSLIPKEITPEVLIEFSHRLVTGVVSISILVLTVWTWRKLGHIREVKLLGFLAMFFLIAQALIGAAQVLWGQGDFILALHFGISLISFAAVLLLSMIVFEVDRKFDADNVFIGKKLRWHTIAVTIYSYLVVYTGALVRHTDSSLICPDWPFCYNETPLASPNNMYEWVQMGHRLAVLIIFIWIAYITWHAVKEYKNQRVVYYGWIIAFTIVFLQVIAGMLVVLTKLNLTVALMHSLLISLLFGLLCYMIMLVARSNYNEKMK</sequence>